<organism>
    <name type="scientific">Mus musculus</name>
    <name type="common">Mouse</name>
    <dbReference type="NCBI Taxonomy" id="10090"/>
    <lineage>
        <taxon>Eukaryota</taxon>
        <taxon>Metazoa</taxon>
        <taxon>Chordata</taxon>
        <taxon>Craniata</taxon>
        <taxon>Vertebrata</taxon>
        <taxon>Euteleostomi</taxon>
        <taxon>Mammalia</taxon>
        <taxon>Eutheria</taxon>
        <taxon>Euarchontoglires</taxon>
        <taxon>Glires</taxon>
        <taxon>Rodentia</taxon>
        <taxon>Myomorpha</taxon>
        <taxon>Muroidea</taxon>
        <taxon>Muridae</taxon>
        <taxon>Murinae</taxon>
        <taxon>Mus</taxon>
        <taxon>Mus</taxon>
    </lineage>
</organism>
<sequence>MGARAVVISSLAWGLLSCCFLCSGALGSQRPLRSLPPLPSQAKPRSEPMWMPPKGAEAALAFLYSGDVQRLSGANCSEKYEVRGAEGKAGVPPVLQRAAGTLAQAANFLNMLLQANDIRESSVEEDVEWYQALVRSVAEGDPKAYRALLTFNPAPGASHLQLALQATRMGDETVLQDLSGNKVQEETPGEDLDRPVLQKRVLTNDLRSLDSPKWPRGDGYVGDIQQVKLSPPFLECHEGQLRPGWLVTVSATFYGLKPDLTPEVRGQVQMDIDLQSVDINQCASGPGWYSNTHLCDLNSTQCVPLESQGFVLGRYLCRCRPGFYGASGSGGLEESATQAAGQFGSPQDSLGKLLRCQPCPEGCTSCLDATPCLVEEALALRTAVLACQACCMLAVFLSMLVAYRCRGSKRIRASGIVLLETILFGSLLLYFPVFILYFKPSVFRCVALRWVRLLGFAVVYGTIILKLYRVLQLFLSRTAQRVPHPSSGQLLRRLGQLLLLVLGFLVVWTAGALEPGTQHTALVTRGHTPTGRHFYLCHHDHWDYIMVVAEMLLLCWGSFLCYATRAVPSAFHEPRYMSIALHNELLLSTAFHTARFVLVPSLHPDWTLLLFFLHTHSTVTATLALIFIPKFWKPGAPPREEILDEVYEDELDLQRSGSYLNSSIASAWSERSLEPGDIRDELKKLYAQLEIRKTKEMAANNPHLPKKRGSSHQGLGRSFMRYLAEFPEALARQHSRDSGSLGLGSLPGSSRRRLLSSSLQETEKPPALRKTRSTYDHHREHNTLPFDSTLRRTLSKKASPTDGRESLADGPPALGFRSASAHNLTVGERLPRARPISLQKSLSVAAGSREKALLVASQAYLEETYRQAKEREERKKAEAAMVSPVRRPSTRRLEWPLRAPLSAPPSPGKSSSMDSSQTTARPHEEAGRRLPHPPIRHQVSTPVLALSGICLGEPRMLSPTPASTLAPILLPAPAPAPAPVLAPVSKPPQSPTLLTFICPWENAELPGKKENVVQEDPAGPERSGHSPASARTKIWRALSVAVEKRGTGESEALTEGGHVQGEADDTDEEKPKVFSKSHSLKTPLQQGSVRSLGLAIKALTRSRSTYKEKDGGEGTPETEKGKPTEVSTGAPLRSPRLGRPKAVSKQVALAPCEDEESLQNQQNAHTSRMLHVCQKEGSREQEDRNKRVAPGPGERKVERTGKITMTTLRQVFGEKNAEQAKESPAGYQEVPNPALQSLGSADHRVAEVCPWEVTEPESGMDPPESVNKAKVYSWERTEGGSLEKKPSRQVLSRSWEEREKVLAESETEGVGAIPRKKPERLVRSQEAVCPWESPDSGGLSPQLVHQESDRTGGRFVVVSKGDAHPEALPSHAAKAELCLWEMSDVGEGTSTQRVQELPEERQKSPKKATFWGERNLGGDLVSLCPWESTDFRGPSAVSLQAPGSSGSLGSGIAEVCPWEAENIANDKKAEVCPWELGEELAGSDGLNPGADGKSLPGKETPSRKGCLAESGEQTVRAKPTVPQGQESVCPWEDEAPERSSPQPDKASSKAGEKLLSHGGSQVLQVCPWEAVKPEEKQATLSTAEICPWEVDGQPETRTSEHPSKGEVHKDEEKMPGRARIKAQEEAEGRIQKQEAICPWESMAPGSTPQRDTEKAQASLQRQGSVAGRAAEICPWEVGTEVGEERTIGAEASEARPNDAGHASTDSGSRQVAASAPKKSERLGSEKEVVCPWDSLSPGDSSQQPDTPNTEKLKDELQEHGSSRPIEVCPWEAEEVPTGEKAKICPWELNEGTVGKGLEREPGCEPERQRRQNLEEAGLPFQEEGTSKGDTKLCREQEGEAICPWKPPAQVPKVSDLPLSTVGQGVEGQSLEASDRASEKGELRQDLKMGSLPEYITQVVPVDGGGASSELQPISLQEGMVLAGSSSHPHIQCPDQPRVSSQPLVSTGDGTAEVCPWDAPDSDSDTKVEPCAQKVTGRVTETEMSRQDEKEKSQEEKERAPETRDHEGVAVQKMPQTSNFGKQEAVCPRESQDFGVQAATDASDGSKGGSEKVCPWEVEEVPSIKEAEICPWEASPGAVGEGALDLGQDGESQGEGRAERHLLKAAETVCPLEGTMSSGLFTQEDVVDTDLPKVGLHGASSPGKGLAELCVWEVTDPEGNKIKGTMADICPWEETRAQSDESGPLALPVTQAGVPAAPEKSVCLSVHGPLESFLPESKSVRPDISKPPGSSRPEGVREQEPLELETGAKSVPKPSPTETEAPESFTLTDDQGLMASEGEAGELSPPPDYPWDCE</sequence>
<keyword id="KW-1003">Cell membrane</keyword>
<keyword id="KW-0966">Cell projection</keyword>
<keyword id="KW-1015">Disulfide bond</keyword>
<keyword id="KW-0297">G-protein coupled receptor</keyword>
<keyword id="KW-0325">Glycoprotein</keyword>
<keyword id="KW-0472">Membrane</keyword>
<keyword id="KW-0628">Postsynaptic cell membrane</keyword>
<keyword id="KW-0675">Receptor</keyword>
<keyword id="KW-1185">Reference proteome</keyword>
<keyword id="KW-0716">Sensory transduction</keyword>
<keyword id="KW-0732">Signal</keyword>
<keyword id="KW-0770">Synapse</keyword>
<keyword id="KW-0807">Transducer</keyword>
<keyword id="KW-0812">Transmembrane</keyword>
<keyword id="KW-1133">Transmembrane helix</keyword>
<keyword id="KW-0844">Vision</keyword>
<comment type="function">
    <text evidence="4 5 7 9 11 12">Orphan receptor involved in vision (PubMed:22325362, PubMed:24114537, PubMed:24790204, PubMed:30282023). Required for signal transduction through retinal depolarizing bipolar cells (PubMed:22325362, PubMed:24114537, PubMed:24790204, PubMed:33922602). Acts as an atypical G-protein coupled receptor that recruits and regulates the R7 group RGS-GNB5 complexes instead of activating G proteins: promotes the GTPase activator activity of R7 RGS proteins, increasing the GTPase activity of G protein alpha subunits, thereby driving them into their inactive GDP-bound form (PubMed:22689652, PubMed:24790204). Associates with components of metabotropic signaling cascade in retina ON-bipolar neurons, such as TRPM1 and GRM6: may control the ability of the GRM6 cascade to gate TRPM1 (PubMed:24114537, PubMed:24790204).</text>
</comment>
<comment type="subunit">
    <text evidence="5 7 9 11 13">Homodimer (PubMed:34333057). Associates with the R7 group RGS-GNB5 complexes, composed of an R7 group RGS subunit (RGS6, RGS7, RGS9 or RGS11) and GNB5, promoting their localization to the cell membrane and regulating the GTPase activator activity of R7 RGS proteins (PubMed:22689652). Interacts with TRPM1 (PubMed:24114537, PubMed:24790204). Interacts with GRM6 (PubMed:24114537). Interacts with EGFLAM; transsynaptic interaction is required for synaptic organization of photoreceptor cells (PubMed:30282023).</text>
</comment>
<comment type="subcellular location">
    <subcellularLocation>
        <location evidence="5">Cell membrane</location>
        <topology evidence="2">Multi-pass membrane protein</topology>
    </subcellularLocation>
    <subcellularLocation>
        <location evidence="7">Postsynaptic cell membrane</location>
        <topology evidence="2">Multi-pass membrane protein</topology>
    </subcellularLocation>
    <subcellularLocation>
        <location evidence="4 7 9">Cell projection</location>
        <location evidence="4 7 9">Dendrite</location>
    </subcellularLocation>
    <text evidence="4 9">Specifically localizes to the tips of retinal ON-bipolar dendrites.</text>
</comment>
<comment type="disease">
    <text evidence="4 6 8">Defects in Gpr179 are the cause of nob5 (no b-wave 5), a spontaneous mutation that causes failure to transmit the photoreceptor signal through the depolarizing bipolar cells, characterized by an absence of the electroretinogram (ERG) b-wave (PubMed:22325362, PubMed:24084093, PubMed:24415894). In retina, rod and cone ON-bipolar cell function is absent (PubMed:22325362).</text>
</comment>
<comment type="disease">
    <text evidence="10">Defects in Pde6b are involved in the retinal degeneration 1 (rd1) allele, which causes retinal degeneration (PubMed:25613321). The rd1 allele is mainly caused by defects in the Pde6b gene, but it contains a cofounding mutation in the Gpr179 gene (PubMed:25613321).</text>
</comment>
<comment type="disruption phenotype">
    <text evidence="12 14">Mice display impaired night vision due to a failure to transmit the photoreceptor signal through the depolarizing bipolar cells (PubMed:33922602). Mice also show myopic features, probably caused by a decrease in both retinal dopamine and 3,4-dihydroxyphenylacetic acid (PubMed:36613663).</text>
</comment>
<comment type="similarity">
    <text evidence="16">Belongs to the G-protein coupled receptor 3 family.</text>
</comment>
<dbReference type="CCDS" id="CCDS36292.1"/>
<dbReference type="RefSeq" id="NP_001074689.1">
    <property type="nucleotide sequence ID" value="NM_001081220.2"/>
</dbReference>
<dbReference type="RefSeq" id="XP_006533087.1">
    <property type="nucleotide sequence ID" value="XM_006533024.1"/>
</dbReference>
<dbReference type="SMR" id="E9PY61"/>
<dbReference type="CORUM" id="E9PY61"/>
<dbReference type="FunCoup" id="E9PY61">
    <property type="interactions" value="9"/>
</dbReference>
<dbReference type="IntAct" id="E9PY61">
    <property type="interactions" value="1"/>
</dbReference>
<dbReference type="STRING" id="10090.ENSMUSP00000091474"/>
<dbReference type="GlyGen" id="E9PY61">
    <property type="glycosylation" value="6 sites"/>
</dbReference>
<dbReference type="iPTMnet" id="E9PY61"/>
<dbReference type="PhosphoSitePlus" id="E9PY61"/>
<dbReference type="jPOST" id="E9PY61"/>
<dbReference type="PaxDb" id="10090-ENSMUSP00000091474"/>
<dbReference type="ProteomicsDB" id="372105"/>
<dbReference type="Antibodypedia" id="75347">
    <property type="antibodies" value="44 antibodies from 11 providers"/>
</dbReference>
<dbReference type="Ensembl" id="ENSMUST00000093942.5">
    <property type="protein sequence ID" value="ENSMUSP00000091474.5"/>
    <property type="gene ID" value="ENSMUSG00000070337.5"/>
</dbReference>
<dbReference type="GeneID" id="217143"/>
<dbReference type="KEGG" id="mmu:217143"/>
<dbReference type="UCSC" id="uc007ldy.1">
    <property type="organism name" value="mouse"/>
</dbReference>
<dbReference type="AGR" id="MGI:2443409"/>
<dbReference type="CTD" id="440435"/>
<dbReference type="MGI" id="MGI:2443409">
    <property type="gene designation" value="Gpr179"/>
</dbReference>
<dbReference type="VEuPathDB" id="HostDB:ENSMUSG00000070337"/>
<dbReference type="eggNOG" id="KOG4418">
    <property type="taxonomic scope" value="Eukaryota"/>
</dbReference>
<dbReference type="GeneTree" id="ENSGT00940000160776"/>
<dbReference type="HOGENOM" id="CLU_230841_0_0_1"/>
<dbReference type="InParanoid" id="E9PY61"/>
<dbReference type="OMA" id="KAELCPW"/>
<dbReference type="OrthoDB" id="5823771at2759"/>
<dbReference type="PhylomeDB" id="E9PY61"/>
<dbReference type="TreeFam" id="TF319114"/>
<dbReference type="BioGRID-ORCS" id="217143">
    <property type="hits" value="3 hits in 77 CRISPR screens"/>
</dbReference>
<dbReference type="ChiTaRS" id="Gpr179">
    <property type="organism name" value="mouse"/>
</dbReference>
<dbReference type="PRO" id="PR:E9PY61"/>
<dbReference type="Proteomes" id="UP000000589">
    <property type="component" value="Chromosome 11"/>
</dbReference>
<dbReference type="RNAct" id="E9PY61">
    <property type="molecule type" value="protein"/>
</dbReference>
<dbReference type="Bgee" id="ENSMUSG00000070337">
    <property type="expression patterns" value="Expressed in retinal neural layer and 34 other cell types or tissues"/>
</dbReference>
<dbReference type="GO" id="GO:0051286">
    <property type="term" value="C:cell tip"/>
    <property type="evidence" value="ECO:0000314"/>
    <property type="project" value="MGI"/>
</dbReference>
<dbReference type="GO" id="GO:0030425">
    <property type="term" value="C:dendrite"/>
    <property type="evidence" value="ECO:0000314"/>
    <property type="project" value="MGI"/>
</dbReference>
<dbReference type="GO" id="GO:0044292">
    <property type="term" value="C:dendrite terminus"/>
    <property type="evidence" value="ECO:0000314"/>
    <property type="project" value="MGI"/>
</dbReference>
<dbReference type="GO" id="GO:0045211">
    <property type="term" value="C:postsynaptic membrane"/>
    <property type="evidence" value="ECO:0000315"/>
    <property type="project" value="UniProtKB"/>
</dbReference>
<dbReference type="GO" id="GO:0004930">
    <property type="term" value="F:G protein-coupled receptor activity"/>
    <property type="evidence" value="ECO:0007669"/>
    <property type="project" value="UniProtKB-KW"/>
</dbReference>
<dbReference type="GO" id="GO:0072659">
    <property type="term" value="P:protein localization to plasma membrane"/>
    <property type="evidence" value="ECO:0000314"/>
    <property type="project" value="MGI"/>
</dbReference>
<dbReference type="GO" id="GO:0009416">
    <property type="term" value="P:response to light stimulus"/>
    <property type="evidence" value="ECO:0000315"/>
    <property type="project" value="MGI"/>
</dbReference>
<dbReference type="GO" id="GO:0007601">
    <property type="term" value="P:visual perception"/>
    <property type="evidence" value="ECO:0000315"/>
    <property type="project" value="UniProtKB"/>
</dbReference>
<dbReference type="CDD" id="cd15293">
    <property type="entry name" value="7tmC_GPR158-like"/>
    <property type="match status" value="1"/>
</dbReference>
<dbReference type="CDD" id="cd00054">
    <property type="entry name" value="EGF_CA"/>
    <property type="match status" value="1"/>
</dbReference>
<dbReference type="InterPro" id="IPR017978">
    <property type="entry name" value="GPCR_3_C"/>
</dbReference>
<dbReference type="InterPro" id="IPR043458">
    <property type="entry name" value="GPR158/179"/>
</dbReference>
<dbReference type="InterPro" id="IPR054714">
    <property type="entry name" value="GPR158_179_extracellular"/>
</dbReference>
<dbReference type="PANTHER" id="PTHR32546">
    <property type="entry name" value="G-PROTEIN COUPLED RECEPTOR 158-RELATED"/>
    <property type="match status" value="1"/>
</dbReference>
<dbReference type="PANTHER" id="PTHR32546:SF7">
    <property type="entry name" value="G-PROTEIN COUPLED RECEPTOR 179-RELATED"/>
    <property type="match status" value="1"/>
</dbReference>
<dbReference type="Pfam" id="PF00003">
    <property type="entry name" value="7tm_3"/>
    <property type="match status" value="1"/>
</dbReference>
<dbReference type="Pfam" id="PF22572">
    <property type="entry name" value="GPR158_179_EC"/>
    <property type="match status" value="1"/>
</dbReference>
<dbReference type="PROSITE" id="PS50259">
    <property type="entry name" value="G_PROTEIN_RECEP_F3_4"/>
    <property type="match status" value="1"/>
</dbReference>
<accession>E9PY61</accession>
<proteinExistence type="evidence at protein level"/>
<protein>
    <recommendedName>
        <fullName evidence="16">G-protein coupled receptor 179</fullName>
    </recommendedName>
</protein>
<reference key="1">
    <citation type="journal article" date="2009" name="PLoS Biol.">
        <title>Lineage-specific biology revealed by a finished genome assembly of the mouse.</title>
        <authorList>
            <person name="Church D.M."/>
            <person name="Goodstadt L."/>
            <person name="Hillier L.W."/>
            <person name="Zody M.C."/>
            <person name="Goldstein S."/>
            <person name="She X."/>
            <person name="Bult C.J."/>
            <person name="Agarwala R."/>
            <person name="Cherry J.L."/>
            <person name="DiCuccio M."/>
            <person name="Hlavina W."/>
            <person name="Kapustin Y."/>
            <person name="Meric P."/>
            <person name="Maglott D."/>
            <person name="Birtle Z."/>
            <person name="Marques A.C."/>
            <person name="Graves T."/>
            <person name="Zhou S."/>
            <person name="Teague B."/>
            <person name="Potamousis K."/>
            <person name="Churas C."/>
            <person name="Place M."/>
            <person name="Herschleb J."/>
            <person name="Runnheim R."/>
            <person name="Forrest D."/>
            <person name="Amos-Landgraf J."/>
            <person name="Schwartz D.C."/>
            <person name="Cheng Z."/>
            <person name="Lindblad-Toh K."/>
            <person name="Eichler E.E."/>
            <person name="Ponting C.P."/>
        </authorList>
    </citation>
    <scope>NUCLEOTIDE SEQUENCE [LARGE SCALE GENOMIC DNA]</scope>
    <source>
        <strain>C57BL/6J</strain>
    </source>
</reference>
<reference key="2">
    <citation type="journal article" date="2012" name="Am. J. Hum. Genet.">
        <title>GPR179 is required for depolarizing bipolar cell function and is mutated in autosomal-recessive complete congenital stationary night blindness.</title>
        <authorList>
            <person name="Peachey N.S."/>
            <person name="Ray T.A."/>
            <person name="Florijn R."/>
            <person name="Rowe L.B."/>
            <person name="Sjoerdsma T."/>
            <person name="Contreras-Alcantara S."/>
            <person name="Baba K."/>
            <person name="Tosini G."/>
            <person name="Pozdeyev N."/>
            <person name="Iuvone P.M."/>
            <person name="Bojang P. Jr."/>
            <person name="Pearring J.N."/>
            <person name="Simonsz H.J."/>
            <person name="van Genderen M."/>
            <person name="Birch D.G."/>
            <person name="Traboulsi E.I."/>
            <person name="Dorfman A."/>
            <person name="Lopez I."/>
            <person name="Ren H."/>
            <person name="Goldberg A.F."/>
            <person name="Nishina P.M."/>
            <person name="Lachapelle P."/>
            <person name="McCall M.A."/>
            <person name="Koenekoop R.K."/>
            <person name="Bergen A.A."/>
            <person name="Kamermans M."/>
            <person name="Gregg R.G."/>
        </authorList>
    </citation>
    <scope>FUNCTION</scope>
    <scope>INVOLVEMENT IN NOB5</scope>
</reference>
<reference key="3">
    <citation type="journal article" date="2012" name="J. Cell Biol.">
        <title>GPR158/179 regulate G protein signaling by controlling localization and activity of the RGS7 complexes.</title>
        <authorList>
            <person name="Orlandi C."/>
            <person name="Posokhova E."/>
            <person name="Masuho I."/>
            <person name="Ray T.A."/>
            <person name="Hasan N."/>
            <person name="Gregg R.G."/>
            <person name="Martemyanov K.A."/>
        </authorList>
    </citation>
    <scope>FUNCTION</scope>
    <scope>SUBCELLULAR LOCATION</scope>
    <scope>INTERACTION WITH RGS6; RGS7; RGS9 AND RGS11</scope>
</reference>
<reference key="4">
    <citation type="journal article" date="2013" name="Mol. Vis.">
        <title>Presence of the Gpr179(nob5) allele in a C3H-derived transgenic mouse.</title>
        <authorList>
            <person name="Balmer J."/>
            <person name="Ji R."/>
            <person name="Ray T.A."/>
            <person name="Selber F."/>
            <person name="Gassmann M."/>
            <person name="Peachey N.S."/>
            <person name="Gregg R.G."/>
            <person name="Enzmann V."/>
        </authorList>
    </citation>
    <scope>INVOLVEMENT IN NOB5</scope>
</reference>
<reference key="5">
    <citation type="journal article" date="2013" name="Invest. Ophthalmol. Vis. Sci.">
        <title>Ultrastructural localization of GPR179 and the impact of mutant forms on retinal function in CSNB1 patients and a mouse model.</title>
        <authorList>
            <person name="Klooster J."/>
            <person name="van Genderen M.M."/>
            <person name="Yu M."/>
            <person name="Florijn R.J."/>
            <person name="Riemslag F.C."/>
            <person name="Bergen A.A."/>
            <person name="Gregg R.G."/>
            <person name="Peachey N.S."/>
            <person name="Kamermans M."/>
        </authorList>
    </citation>
    <scope>INVOLVEMENT IN NOB5</scope>
</reference>
<reference key="6">
    <citation type="journal article" date="2013" name="Invest. Ophthalmol. Vis. Sci.">
        <title>Orphan receptor GPR179 forms macromolecular complexes with components of metabotropic signaling cascade in retina ON-bipolar neurons.</title>
        <authorList>
            <person name="Orlandi C."/>
            <person name="Cao Y."/>
            <person name="Martemyanov K.A."/>
        </authorList>
    </citation>
    <scope>FUNCTION</scope>
    <scope>SUBCELLULAR LOCATION</scope>
    <scope>INTERACTION WITH TRPM1 AND GRM6</scope>
</reference>
<reference key="7">
    <citation type="journal article" date="2014" name="J. Neurosci.">
        <title>GPR179 is required for high sensitivity of the mGluR6 signaling cascade in depolarizing bipolar cells.</title>
        <authorList>
            <person name="Ray T.A."/>
            <person name="Heath K.M."/>
            <person name="Hasan N."/>
            <person name="Noel J.M."/>
            <person name="Samuels I.S."/>
            <person name="Martemyanov K.A."/>
            <person name="Peachey N.S."/>
            <person name="McCall M.A."/>
            <person name="Gregg R.G."/>
        </authorList>
    </citation>
    <scope>FUNCTION</scope>
    <scope>SUBCELLULAR LOCATION</scope>
    <scope>INTERACTION WITH TRPM1</scope>
</reference>
<reference key="8">
    <citation type="journal article" date="2015" name="Nat. Commun.">
        <title>Gene therapy restores vision in rd1 mice after removal of a confounding mutation in Gpr179.</title>
        <authorList>
            <person name="Nishiguchi K.M."/>
            <person name="Carvalho L.S."/>
            <person name="Rizzi M."/>
            <person name="Powell K."/>
            <person name="Holthaus S.M."/>
            <person name="Azam S.A."/>
            <person name="Duran Y."/>
            <person name="Ribeiro J."/>
            <person name="Luhmann U.F."/>
            <person name="Bainbridge J.W."/>
            <person name="Smith A.J."/>
            <person name="Ali R.R."/>
        </authorList>
    </citation>
    <scope>INVOLVEMENT IN RETINAL DEGENERATION</scope>
</reference>
<reference key="9">
    <citation type="journal article" date="2018" name="Cell Rep.">
        <title>Transsynaptic binding of orphan receptor GPR179 to Dystroglycan-pikachurin complex is essential for the synaptic organization of photoreceptors.</title>
        <authorList>
            <person name="Orlandi C."/>
            <person name="Omori Y."/>
            <person name="Wang Y."/>
            <person name="Cao Y."/>
            <person name="Ueno A."/>
            <person name="Roux M.J."/>
            <person name="Condomitti G."/>
            <person name="de Wit J."/>
            <person name="Kanagawa M."/>
            <person name="Furukawa T."/>
            <person name="Martemyanov K.A."/>
        </authorList>
    </citation>
    <scope>FUNCTION</scope>
    <scope>INTERACTION WITH EGFLAM</scope>
</reference>
<reference key="10">
    <citation type="journal article" date="2021" name="Int. J. Mol. Sci.">
        <title>A new mouse model for complete congenital stationary night blindness due to Gpr179 deficiency.</title>
        <authorList>
            <person name="Orhan E."/>
            <person name="Neuille M."/>
            <person name="de Sousa Dias M."/>
            <person name="Pugliese T."/>
            <person name="Michiels C."/>
            <person name="Condroyer C."/>
            <person name="Antonio A."/>
            <person name="Sahel J.A."/>
            <person name="Audo I."/>
            <person name="Zeitz C."/>
        </authorList>
    </citation>
    <scope>FUNCTION</scope>
    <scope>DISRUPTION PHENOTYPE</scope>
</reference>
<reference key="11">
    <citation type="journal article" date="2021" name="Neurochem. Int.">
        <title>Homodimerization of a proximal region within the C-terminus of the orphan G-protein coupled receptor GPR179.</title>
        <authorList>
            <person name="Bachert W."/>
            <person name="Klotz L."/>
            <person name="Sticht H."/>
            <person name="Enz R."/>
        </authorList>
    </citation>
    <scope>SUBUNIT</scope>
</reference>
<reference key="12">
    <citation type="journal article" date="2022" name="Int. J. Mol. Sci.">
        <title>Mice lacking Gpr179 with complete congenital stationary night blindness are a good model for myopia.</title>
        <authorList>
            <person name="Wilmet B."/>
            <person name="Callebert J."/>
            <person name="Duvoisin R."/>
            <person name="Goulet R."/>
            <person name="Tourain C."/>
            <person name="Michiels C."/>
            <person name="Frederiksen H."/>
            <person name="Schaeffel F."/>
            <person name="Marre O."/>
            <person name="Sahel J.A."/>
            <person name="Audo I."/>
            <person name="Picaud S."/>
            <person name="Zeitz C."/>
        </authorList>
    </citation>
    <scope>DISRUPTION PHENOTYPE</scope>
</reference>
<gene>
    <name evidence="15 17" type="primary">Gpr179</name>
    <name evidence="15" type="synonym">Nob5</name>
</gene>
<evidence type="ECO:0000250" key="1">
    <source>
        <dbReference type="UniProtKB" id="Q5T848"/>
    </source>
</evidence>
<evidence type="ECO:0000255" key="2"/>
<evidence type="ECO:0000256" key="3">
    <source>
        <dbReference type="SAM" id="MobiDB-lite"/>
    </source>
</evidence>
<evidence type="ECO:0000269" key="4">
    <source>
    </source>
</evidence>
<evidence type="ECO:0000269" key="5">
    <source>
    </source>
</evidence>
<evidence type="ECO:0000269" key="6">
    <source>
    </source>
</evidence>
<evidence type="ECO:0000269" key="7">
    <source>
    </source>
</evidence>
<evidence type="ECO:0000269" key="8">
    <source>
    </source>
</evidence>
<evidence type="ECO:0000269" key="9">
    <source>
    </source>
</evidence>
<evidence type="ECO:0000269" key="10">
    <source>
    </source>
</evidence>
<evidence type="ECO:0000269" key="11">
    <source>
    </source>
</evidence>
<evidence type="ECO:0000269" key="12">
    <source>
    </source>
</evidence>
<evidence type="ECO:0000269" key="13">
    <source>
    </source>
</evidence>
<evidence type="ECO:0000269" key="14">
    <source>
    </source>
</evidence>
<evidence type="ECO:0000303" key="15">
    <source>
    </source>
</evidence>
<evidence type="ECO:0000305" key="16"/>
<evidence type="ECO:0000312" key="17">
    <source>
        <dbReference type="MGI" id="MGI:2443409"/>
    </source>
</evidence>
<name>GP179_MOUSE</name>
<feature type="signal peptide" evidence="2">
    <location>
        <begin position="1"/>
        <end position="27"/>
    </location>
</feature>
<feature type="chain" id="PRO_5003245698" description="G-protein coupled receptor 179" evidence="2">
    <location>
        <begin position="28"/>
        <end position="2293"/>
    </location>
</feature>
<feature type="transmembrane region" description="Helical; Name=1" evidence="2">
    <location>
        <begin position="383"/>
        <end position="403"/>
    </location>
</feature>
<feature type="transmembrane region" description="Helical; Name=2" evidence="2">
    <location>
        <begin position="416"/>
        <end position="436"/>
    </location>
</feature>
<feature type="transmembrane region" description="Helical; Name=3" evidence="2">
    <location>
        <begin position="445"/>
        <end position="465"/>
    </location>
</feature>
<feature type="transmembrane region" description="Helical; Name=4" evidence="2">
    <location>
        <begin position="494"/>
        <end position="514"/>
    </location>
</feature>
<feature type="transmembrane region" description="Helical; Name=5" evidence="2">
    <location>
        <begin position="544"/>
        <end position="564"/>
    </location>
</feature>
<feature type="transmembrane region" description="Helical; Name=6" evidence="2">
    <location>
        <begin position="585"/>
        <end position="602"/>
    </location>
</feature>
<feature type="transmembrane region" description="Helical; Name=7" evidence="2">
    <location>
        <begin position="608"/>
        <end position="628"/>
    </location>
</feature>
<feature type="region of interest" description="Cache-like region" evidence="1">
    <location>
        <begin position="62"/>
        <end position="245"/>
    </location>
</feature>
<feature type="region of interest" description="Disordered" evidence="3">
    <location>
        <begin position="733"/>
        <end position="812"/>
    </location>
</feature>
<feature type="region of interest" description="Disordered" evidence="3">
    <location>
        <begin position="872"/>
        <end position="935"/>
    </location>
</feature>
<feature type="region of interest" description="Disordered" evidence="3">
    <location>
        <begin position="1046"/>
        <end position="1235"/>
    </location>
</feature>
<feature type="region of interest" description="Disordered" evidence="3">
    <location>
        <begin position="1275"/>
        <end position="1294"/>
    </location>
</feature>
<feature type="region of interest" description="Disordered" evidence="3">
    <location>
        <begin position="1326"/>
        <end position="1345"/>
    </location>
</feature>
<feature type="region of interest" description="Disordered" evidence="3">
    <location>
        <begin position="1388"/>
        <end position="1411"/>
    </location>
</feature>
<feature type="region of interest" description="Disordered" evidence="3">
    <location>
        <begin position="1479"/>
        <end position="1560"/>
    </location>
</feature>
<feature type="region of interest" description="Disordered" evidence="3">
    <location>
        <begin position="1578"/>
        <end position="1770"/>
    </location>
</feature>
<feature type="region of interest" description="Disordered" evidence="3">
    <location>
        <begin position="1792"/>
        <end position="1828"/>
    </location>
</feature>
<feature type="region of interest" description="Disordered" evidence="3">
    <location>
        <begin position="1844"/>
        <end position="1882"/>
    </location>
</feature>
<feature type="region of interest" description="Disordered" evidence="3">
    <location>
        <begin position="1924"/>
        <end position="2051"/>
    </location>
</feature>
<feature type="region of interest" description="Disordered" evidence="3">
    <location>
        <begin position="2212"/>
        <end position="2293"/>
    </location>
</feature>
<feature type="compositionally biased region" description="Low complexity" evidence="3">
    <location>
        <begin position="738"/>
        <end position="759"/>
    </location>
</feature>
<feature type="compositionally biased region" description="Basic and acidic residues" evidence="3">
    <location>
        <begin position="773"/>
        <end position="782"/>
    </location>
</feature>
<feature type="compositionally biased region" description="Polar residues" evidence="3">
    <location>
        <begin position="1080"/>
        <end position="1089"/>
    </location>
</feature>
<feature type="compositionally biased region" description="Basic and acidic residues" evidence="3">
    <location>
        <begin position="1105"/>
        <end position="1123"/>
    </location>
</feature>
<feature type="compositionally biased region" description="Basic and acidic residues" evidence="3">
    <location>
        <begin position="1173"/>
        <end position="1186"/>
    </location>
</feature>
<feature type="compositionally biased region" description="Basic and acidic residues" evidence="3">
    <location>
        <begin position="1275"/>
        <end position="1286"/>
    </location>
</feature>
<feature type="compositionally biased region" description="Basic and acidic residues" evidence="3">
    <location>
        <begin position="1546"/>
        <end position="1555"/>
    </location>
</feature>
<feature type="compositionally biased region" description="Basic and acidic residues" evidence="3">
    <location>
        <begin position="1597"/>
        <end position="1632"/>
    </location>
</feature>
<feature type="compositionally biased region" description="Polar residues" evidence="3">
    <location>
        <begin position="1644"/>
        <end position="1663"/>
    </location>
</feature>
<feature type="compositionally biased region" description="Basic and acidic residues" evidence="3">
    <location>
        <begin position="1682"/>
        <end position="1698"/>
    </location>
</feature>
<feature type="compositionally biased region" description="Basic and acidic residues" evidence="3">
    <location>
        <begin position="1717"/>
        <end position="1728"/>
    </location>
</feature>
<feature type="compositionally biased region" description="Polar residues" evidence="3">
    <location>
        <begin position="1737"/>
        <end position="1747"/>
    </location>
</feature>
<feature type="compositionally biased region" description="Basic and acidic residues" evidence="3">
    <location>
        <begin position="1748"/>
        <end position="1761"/>
    </location>
</feature>
<feature type="compositionally biased region" description="Basic and acidic residues" evidence="3">
    <location>
        <begin position="1796"/>
        <end position="1813"/>
    </location>
</feature>
<feature type="compositionally biased region" description="Basic and acidic residues" evidence="3">
    <location>
        <begin position="1872"/>
        <end position="1882"/>
    </location>
</feature>
<feature type="compositionally biased region" description="Polar residues" evidence="3">
    <location>
        <begin position="1937"/>
        <end position="1948"/>
    </location>
</feature>
<feature type="compositionally biased region" description="Basic and acidic residues" evidence="3">
    <location>
        <begin position="1979"/>
        <end position="2007"/>
    </location>
</feature>
<feature type="compositionally biased region" description="Pro residues" evidence="3">
    <location>
        <begin position="2283"/>
        <end position="2293"/>
    </location>
</feature>
<feature type="glycosylation site" description="N-linked (GlcNAc...) asparagine" evidence="2">
    <location>
        <position position="75"/>
    </location>
</feature>
<feature type="glycosylation site" description="N-linked (GlcNAc...) asparagine" evidence="2">
    <location>
        <position position="298"/>
    </location>
</feature>
<feature type="glycosylation site" description="N-linked (GlcNAc...) asparagine" evidence="2">
    <location>
        <position position="661"/>
    </location>
</feature>
<feature type="glycosylation site" description="N-linked (GlcNAc...) asparagine" evidence="2">
    <location>
        <position position="823"/>
    </location>
</feature>
<feature type="disulfide bond" evidence="1">
    <location>
        <begin position="76"/>
        <end position="236"/>
    </location>
</feature>
<feature type="disulfide bond" evidence="1">
    <location>
        <begin position="445"/>
        <end position="537"/>
    </location>
</feature>